<reference key="1">
    <citation type="journal article" date="1993" name="Mech. Dev.">
        <title>Cloning and developmental expression of Grg, a mouse gene related to the groucho transcript of the Drosophila Enhancer of split complex.</title>
        <authorList>
            <person name="Mallo M."/>
            <person name="Franco del Amo F."/>
            <person name="Gridley T."/>
        </authorList>
    </citation>
    <scope>NUCLEOTIDE SEQUENCE [MRNA] (ISOFORM 1)</scope>
    <scope>TISSUE SPECIFICITY</scope>
</reference>
<reference key="2">
    <citation type="journal article" date="1993" name="Eur. J. Biochem.">
        <title>Molecular cloning and expression of mouse and human cDNA encoding AES and ESG proteins with strong similarity to Drosophila enhancer of split groucho protein.</title>
        <authorList>
            <person name="Miyasaka H."/>
            <person name="Choudhury B.K."/>
            <person name="Hou E.W."/>
            <person name="Li S.S.-L."/>
        </authorList>
    </citation>
    <scope>NUCLEOTIDE SEQUENCE [MRNA] (ISOFORMS 1 AND 2)</scope>
    <source>
        <strain>CD-1</strain>
    </source>
</reference>
<reference key="3">
    <citation type="journal article" date="1998" name="Nature">
        <title>The Xenopus Wnt effector XTcf-3 interacts with Groucho-related transcriptional repressors.</title>
        <authorList>
            <person name="Roose J."/>
            <person name="Molenaar M."/>
            <person name="Peterson J."/>
            <person name="Hurenkamp J."/>
            <person name="Brantjes H."/>
            <person name="Moerer P."/>
            <person name="van de Wetering M."/>
            <person name="Destree O."/>
            <person name="Clevers H."/>
        </authorList>
    </citation>
    <scope>OLIGOMERIZATION</scope>
    <scope>INTERACTION WITH TCF7</scope>
</reference>
<reference key="4">
    <citation type="journal article" date="2001" name="Nucleic Acids Res.">
        <title>All Tcf HMG box transcription factors interact with Groucho-related co-repressors.</title>
        <authorList>
            <person name="Brantjes H."/>
            <person name="Roose J."/>
            <person name="van De Wetering M."/>
            <person name="Clevers H."/>
        </authorList>
    </citation>
    <scope>OLIGOMERIZATION</scope>
    <scope>INTERACTION WITH TCF7</scope>
</reference>
<reference key="5">
    <citation type="journal article" date="2002" name="Development">
        <title>Six3-mediated auto repression and eye development requires its interaction with members of the Groucho-related family of co-repressors.</title>
        <authorList>
            <person name="Zhu C.C."/>
            <person name="Dyer M.A."/>
            <person name="Uchikawa M."/>
            <person name="Kondoh H."/>
            <person name="Lagutin O.V."/>
            <person name="Oliver G."/>
        </authorList>
    </citation>
    <scope>FUNCTION</scope>
    <scope>SUBCELLULAR LOCATION</scope>
    <scope>DEVELOPMENTAL STAGE</scope>
    <scope>INTERACTION WITH SIX3 AND SIX6</scope>
</reference>
<reference key="6">
    <citation type="journal article" date="2010" name="Cell">
        <title>A tissue-specific atlas of mouse protein phosphorylation and expression.</title>
        <authorList>
            <person name="Huttlin E.L."/>
            <person name="Jedrychowski M.P."/>
            <person name="Elias J.E."/>
            <person name="Goswami T."/>
            <person name="Rad R."/>
            <person name="Beausoleil S.A."/>
            <person name="Villen J."/>
            <person name="Haas W."/>
            <person name="Sowa M.E."/>
            <person name="Gygi S.P."/>
        </authorList>
    </citation>
    <scope>IDENTIFICATION BY MASS SPECTROMETRY [LARGE SCALE ANALYSIS]</scope>
    <source>
        <tissue>Testis</tissue>
    </source>
</reference>
<feature type="chain" id="PRO_0000050835" description="TLE family member 5">
    <location>
        <begin position="1"/>
        <end position="197"/>
    </location>
</feature>
<feature type="region of interest" description="CCN domain">
    <location>
        <begin position="166"/>
        <end position="197"/>
    </location>
</feature>
<feature type="region of interest" description="Disordered" evidence="3">
    <location>
        <begin position="170"/>
        <end position="197"/>
    </location>
</feature>
<feature type="compositionally biased region" description="Basic and acidic residues" evidence="3">
    <location>
        <begin position="175"/>
        <end position="197"/>
    </location>
</feature>
<feature type="modified residue" description="Phosphoserine" evidence="2">
    <location>
        <position position="196"/>
    </location>
</feature>
<feature type="splice variant" id="VSP_006771" description="In isoform 2." evidence="8">
    <original>MMFPQSRHSG</original>
    <variation>MGGAGRRSPSCPRRA</variation>
    <location>
        <begin position="1"/>
        <end position="10"/>
    </location>
</feature>
<proteinExistence type="evidence at protein level"/>
<sequence>MMFPQSRHSGSSHLPQQLKFTTSDSCDRIKDEFQLLQAQYHSLKLECDKLASEKSEMQRHYVMYYEMSYGLNIEMHKQAEIVKRLNGICAQVLPYLSQEHQQQVLGAIERAKQVTAPELNSIIRQQLQAHQLSQLQALALPLTPLPVGLQPPSLPAVSAGTGLLSLSALGSQTHLSKEDKNGHDGDTHQEDDGEKSD</sequence>
<evidence type="ECO:0000250" key="1"/>
<evidence type="ECO:0000250" key="2">
    <source>
        <dbReference type="UniProtKB" id="Q08117"/>
    </source>
</evidence>
<evidence type="ECO:0000256" key="3">
    <source>
        <dbReference type="SAM" id="MobiDB-lite"/>
    </source>
</evidence>
<evidence type="ECO:0000269" key="4">
    <source>
    </source>
</evidence>
<evidence type="ECO:0000269" key="5">
    <source>
    </source>
</evidence>
<evidence type="ECO:0000269" key="6">
    <source>
    </source>
</evidence>
<evidence type="ECO:0000269" key="7">
    <source>
    </source>
</evidence>
<evidence type="ECO:0000303" key="8">
    <source>
    </source>
</evidence>
<evidence type="ECO:0000305" key="9"/>
<evidence type="ECO:0000312" key="10">
    <source>
        <dbReference type="MGI" id="MGI:95806"/>
    </source>
</evidence>
<protein>
    <recommendedName>
        <fullName evidence="9">TLE family member 5</fullName>
    </recommendedName>
    <alternativeName>
        <fullName>Amino-terminal enhancer of split</fullName>
        <shortName>Amino enhancer of split</shortName>
    </alternativeName>
    <alternativeName>
        <fullName>Grg-5</fullName>
    </alternativeName>
    <alternativeName>
        <fullName>Groucho-related protein 5</fullName>
    </alternativeName>
    <alternativeName>
        <fullName>Protein ESP1</fullName>
    </alternativeName>
    <alternativeName>
        <fullName>Protein GRG</fullName>
    </alternativeName>
</protein>
<gene>
    <name evidence="9" type="primary">Tle5</name>
    <name evidence="10" type="synonym">Aes</name>
    <name type="synonym">Esp1</name>
    <name type="synonym">Grg</name>
    <name type="synonym">Grg5</name>
</gene>
<dbReference type="EMBL" id="L12140">
    <property type="protein sequence ID" value="AAA03023.1"/>
    <property type="molecule type" value="mRNA"/>
</dbReference>
<dbReference type="EMBL" id="X73359">
    <property type="protein sequence ID" value="CAA51769.1"/>
    <property type="molecule type" value="mRNA"/>
</dbReference>
<dbReference type="EMBL" id="X73361">
    <property type="protein sequence ID" value="CAA51771.1"/>
    <property type="molecule type" value="mRNA"/>
</dbReference>
<dbReference type="CCDS" id="CCDS24062.1"/>
<dbReference type="PIR" id="A56675">
    <property type="entry name" value="A56675"/>
</dbReference>
<dbReference type="PIR" id="S35680">
    <property type="entry name" value="S35680"/>
</dbReference>
<dbReference type="RefSeq" id="NP_034477.1">
    <molecule id="P63002-1"/>
    <property type="nucleotide sequence ID" value="NM_010347.4"/>
</dbReference>
<dbReference type="SMR" id="P63002"/>
<dbReference type="BioGRID" id="200056">
    <property type="interactions" value="10"/>
</dbReference>
<dbReference type="CORUM" id="P63002"/>
<dbReference type="FunCoup" id="P63002">
    <property type="interactions" value="1638"/>
</dbReference>
<dbReference type="IntAct" id="P63002">
    <property type="interactions" value="5"/>
</dbReference>
<dbReference type="MINT" id="P63002"/>
<dbReference type="STRING" id="10090.ENSMUSP00000002518"/>
<dbReference type="iPTMnet" id="P63002"/>
<dbReference type="PhosphoSitePlus" id="P63002"/>
<dbReference type="PaxDb" id="10090-ENSMUSP00000002518"/>
<dbReference type="PeptideAtlas" id="P63002"/>
<dbReference type="ProteomicsDB" id="281944"/>
<dbReference type="ProteomicsDB" id="281945">
    <molecule id="P63002-2"/>
</dbReference>
<dbReference type="Pumba" id="P63002"/>
<dbReference type="Antibodypedia" id="10920">
    <property type="antibodies" value="393 antibodies from 35 providers"/>
</dbReference>
<dbReference type="DNASU" id="14797"/>
<dbReference type="Ensembl" id="ENSMUST00000002518.9">
    <molecule id="P63002-1"/>
    <property type="protein sequence ID" value="ENSMUSP00000002518.9"/>
    <property type="gene ID" value="ENSMUSG00000054452.11"/>
</dbReference>
<dbReference type="GeneID" id="14797"/>
<dbReference type="KEGG" id="mmu:14797"/>
<dbReference type="UCSC" id="uc007gim.2">
    <property type="organism name" value="mouse"/>
</dbReference>
<dbReference type="AGR" id="MGI:95806"/>
<dbReference type="CTD" id="166"/>
<dbReference type="MGI" id="MGI:95806">
    <property type="gene designation" value="Tle5"/>
</dbReference>
<dbReference type="VEuPathDB" id="HostDB:ENSMUSG00000054452"/>
<dbReference type="eggNOG" id="KOG0639">
    <property type="taxonomic scope" value="Eukaryota"/>
</dbReference>
<dbReference type="GeneTree" id="ENSGT01030000234519"/>
<dbReference type="HOGENOM" id="CLU_092092_1_0_1"/>
<dbReference type="InParanoid" id="P63002"/>
<dbReference type="OMA" id="GHGMEAR"/>
<dbReference type="OrthoDB" id="8949191at2759"/>
<dbReference type="PhylomeDB" id="P63002"/>
<dbReference type="BioGRID-ORCS" id="14797">
    <property type="hits" value="0 hits in 79 CRISPR screens"/>
</dbReference>
<dbReference type="ChiTaRS" id="Aes">
    <property type="organism name" value="mouse"/>
</dbReference>
<dbReference type="PRO" id="PR:P63002"/>
<dbReference type="Proteomes" id="UP000000589">
    <property type="component" value="Chromosome 10"/>
</dbReference>
<dbReference type="RNAct" id="P63002">
    <property type="molecule type" value="protein"/>
</dbReference>
<dbReference type="Bgee" id="ENSMUSG00000054452">
    <property type="expression patterns" value="Expressed in embryonic brain and 273 other cell types or tissues"/>
</dbReference>
<dbReference type="ExpressionAtlas" id="P63002">
    <property type="expression patterns" value="baseline and differential"/>
</dbReference>
<dbReference type="GO" id="GO:0005654">
    <property type="term" value="C:nucleoplasm"/>
    <property type="evidence" value="ECO:0000304"/>
    <property type="project" value="Reactome"/>
</dbReference>
<dbReference type="GO" id="GO:0005634">
    <property type="term" value="C:nucleus"/>
    <property type="evidence" value="ECO:0000314"/>
    <property type="project" value="MGI"/>
</dbReference>
<dbReference type="GO" id="GO:0003714">
    <property type="term" value="F:transcription corepressor activity"/>
    <property type="evidence" value="ECO:0000314"/>
    <property type="project" value="MGI"/>
</dbReference>
<dbReference type="GO" id="GO:0090090">
    <property type="term" value="P:negative regulation of canonical Wnt signaling pathway"/>
    <property type="evidence" value="ECO:0007669"/>
    <property type="project" value="Ensembl"/>
</dbReference>
<dbReference type="GO" id="GO:0045892">
    <property type="term" value="P:negative regulation of DNA-templated transcription"/>
    <property type="evidence" value="ECO:0000314"/>
    <property type="project" value="MGI"/>
</dbReference>
<dbReference type="GO" id="GO:0010629">
    <property type="term" value="P:negative regulation of gene expression"/>
    <property type="evidence" value="ECO:0007669"/>
    <property type="project" value="Ensembl"/>
</dbReference>
<dbReference type="GO" id="GO:0060761">
    <property type="term" value="P:negative regulation of response to cytokine stimulus"/>
    <property type="evidence" value="ECO:0007669"/>
    <property type="project" value="Ensembl"/>
</dbReference>
<dbReference type="GO" id="GO:0000122">
    <property type="term" value="P:negative regulation of transcription by RNA polymerase II"/>
    <property type="evidence" value="ECO:0007669"/>
    <property type="project" value="Ensembl"/>
</dbReference>
<dbReference type="GO" id="GO:2000210">
    <property type="term" value="P:positive regulation of anoikis"/>
    <property type="evidence" value="ECO:0007669"/>
    <property type="project" value="Ensembl"/>
</dbReference>
<dbReference type="GO" id="GO:0040008">
    <property type="term" value="P:regulation of growth"/>
    <property type="evidence" value="ECO:0000315"/>
    <property type="project" value="MGI"/>
</dbReference>
<dbReference type="GO" id="GO:0006357">
    <property type="term" value="P:regulation of transcription by RNA polymerase II"/>
    <property type="evidence" value="ECO:0000316"/>
    <property type="project" value="MGI"/>
</dbReference>
<dbReference type="GO" id="GO:0070555">
    <property type="term" value="P:response to interleukin-1"/>
    <property type="evidence" value="ECO:0007669"/>
    <property type="project" value="Ensembl"/>
</dbReference>
<dbReference type="GO" id="GO:0001501">
    <property type="term" value="P:skeletal system development"/>
    <property type="evidence" value="ECO:0000315"/>
    <property type="project" value="MGI"/>
</dbReference>
<dbReference type="GO" id="GO:0016055">
    <property type="term" value="P:Wnt signaling pathway"/>
    <property type="evidence" value="ECO:0007669"/>
    <property type="project" value="UniProtKB-KW"/>
</dbReference>
<dbReference type="InterPro" id="IPR005617">
    <property type="entry name" value="Groucho/TLE_N"/>
</dbReference>
<dbReference type="InterPro" id="IPR009146">
    <property type="entry name" value="Groucho_enhance"/>
</dbReference>
<dbReference type="PANTHER" id="PTHR10814">
    <property type="entry name" value="TRANSDUCIN-LIKE ENHANCER PROTEIN"/>
    <property type="match status" value="1"/>
</dbReference>
<dbReference type="PANTHER" id="PTHR10814:SF31">
    <property type="entry name" value="TRANSDUCIN-LIKE ENHANCER PROTEIN 4"/>
    <property type="match status" value="1"/>
</dbReference>
<dbReference type="Pfam" id="PF03920">
    <property type="entry name" value="TLE_N"/>
    <property type="match status" value="1"/>
</dbReference>
<comment type="function">
    <text evidence="5">Transcriptional corepressor. Acts as a dominant repressor towards other family members. Inhibits NF-kappa-B-regulated gene expression. May be required for the initiation and maintenance of the differentiated state. Essential for the transcriptional repressor activity of SIX3 during retina and lens development.</text>
</comment>
<comment type="subunit">
    <text evidence="1 4 5 7">Homooligomer and heterooligomer with other family members. Binds TCF7 and the NF-kappa-B subunit RELA. Interacts with PHF12 (By similarity). Interacts (via Q domain) with SIX3. Interacts with SIX6.</text>
</comment>
<comment type="interaction">
    <interactant intactId="EBI-646888">
        <id>P63002</id>
    </interactant>
    <interactant intactId="EBI-2297327">
        <id>Q62233</id>
        <label>Six3</label>
    </interactant>
    <organismsDiffer>false</organismsDiffer>
    <experiments>5</experiments>
</comment>
<comment type="subcellular location">
    <subcellularLocation>
        <location evidence="5">Nucleus</location>
    </subcellularLocation>
</comment>
<comment type="alternative products">
    <event type="alternative splicing"/>
    <isoform>
        <id>P63002-1</id>
        <id>Q06195-1</id>
        <name>1</name>
        <name>AES-1</name>
        <sequence type="displayed"/>
    </isoform>
    <isoform>
        <id>P63002-2</id>
        <id>Q06195-2</id>
        <name>2</name>
        <name>AES-2</name>
        <sequence type="described" ref="VSP_006771"/>
    </isoform>
</comment>
<comment type="tissue specificity">
    <text evidence="6">Ubiquitously expressed in developing embryos by midgestation, a wide expression is conserved in adult. In mouse, abundantly expressed in muscle, heart and brain.</text>
</comment>
<comment type="developmental stage">
    <text evidence="5">Expressed in the developing eye and forebrain of embryos.</text>
</comment>
<comment type="domain">
    <text>Lacks the C-terminal WD repeats.</text>
</comment>
<comment type="PTM">
    <text evidence="1">Ubiquitinated by XIAP/BIRC4.</text>
</comment>
<comment type="similarity">
    <text evidence="9">Belongs to the WD repeat Groucho/TLE family.</text>
</comment>
<name>TLE5_MOUSE</name>
<keyword id="KW-0025">Alternative splicing</keyword>
<keyword id="KW-0539">Nucleus</keyword>
<keyword id="KW-0597">Phosphoprotein</keyword>
<keyword id="KW-1185">Reference proteome</keyword>
<keyword id="KW-0678">Repressor</keyword>
<keyword id="KW-0804">Transcription</keyword>
<keyword id="KW-0805">Transcription regulation</keyword>
<keyword id="KW-0832">Ubl conjugation</keyword>
<keyword id="KW-0879">Wnt signaling pathway</keyword>
<accession>P63002</accession>
<accession>Q06195</accession>
<organism>
    <name type="scientific">Mus musculus</name>
    <name type="common">Mouse</name>
    <dbReference type="NCBI Taxonomy" id="10090"/>
    <lineage>
        <taxon>Eukaryota</taxon>
        <taxon>Metazoa</taxon>
        <taxon>Chordata</taxon>
        <taxon>Craniata</taxon>
        <taxon>Vertebrata</taxon>
        <taxon>Euteleostomi</taxon>
        <taxon>Mammalia</taxon>
        <taxon>Eutheria</taxon>
        <taxon>Euarchontoglires</taxon>
        <taxon>Glires</taxon>
        <taxon>Rodentia</taxon>
        <taxon>Myomorpha</taxon>
        <taxon>Muroidea</taxon>
        <taxon>Muridae</taxon>
        <taxon>Murinae</taxon>
        <taxon>Mus</taxon>
        <taxon>Mus</taxon>
    </lineage>
</organism>